<organism>
    <name type="scientific">Mus musculus</name>
    <name type="common">Mouse</name>
    <dbReference type="NCBI Taxonomy" id="10090"/>
    <lineage>
        <taxon>Eukaryota</taxon>
        <taxon>Metazoa</taxon>
        <taxon>Chordata</taxon>
        <taxon>Craniata</taxon>
        <taxon>Vertebrata</taxon>
        <taxon>Euteleostomi</taxon>
        <taxon>Mammalia</taxon>
        <taxon>Eutheria</taxon>
        <taxon>Euarchontoglires</taxon>
        <taxon>Glires</taxon>
        <taxon>Rodentia</taxon>
        <taxon>Myomorpha</taxon>
        <taxon>Muroidea</taxon>
        <taxon>Muridae</taxon>
        <taxon>Murinae</taxon>
        <taxon>Mus</taxon>
        <taxon>Mus</taxon>
    </lineage>
</organism>
<comment type="function">
    <text evidence="2 8 9 10 11 12 14 15 16 17 18 19 20 21 22">Low-fidelity DNA polymerase with a helicase activity that promotes microhomology-mediated end-joining (MMEJ), an alternative non-homologous end-joining (NHEJ) machinery required to repair double-strand breaks in DNA during mitosis (PubMed:21883722, PubMed:25275444, PubMed:25642960, PubMed:25642963, PubMed:29079701, PubMed:31537809). MMEJ is an error-prone repair pathway that produces deletions of sequences from the strand being repaired and promotes genomic rearrangements, such as telomere fusions, some of them leading to cellular transformation (PubMed:25275444, PubMed:25642960, PubMed:25642963, PubMed:29079701, PubMed:31537809). MMEJ is required during mitosis to repair persistent double-strand breaks that originate in S-phase (By similarity). Although error-prone, MMEJ protects against chromosomal instability and tumorigenesis (PubMed:30773314). The polymerase acts by binding directly the 2 ends of resected double-strand breaks, allowing microhomologous sequences in the overhangs to form base pairs (By similarity). It then extends each strand from the base-paired region using the opposing overhang as a template (By similarity). Requires partially resected DNA containing 2 to 6 base pairs of microhomology to perform MMEJ (By similarity). The polymerase lacks proofreading activity and is highly promiscuous: unlike most polymerases, promotes extension of ssDNA and partial ssDNA (pssDNA) substrates (By similarity). When the ends of a break do not contain terminal microhomology must identify embedded complementary sequences through a scanning step (By similarity). Also acts as a DNA helicase, promoting dissociation of the replication protein A complex (RPA/RP-A), composed of RPA1, RPA2 and RPA3, from resected double-strand breaks to allow their annealing and subsequent joining by MMEJ (PubMed:29058711). Removal of RPA/RP-A complex proteins prevents RAD51 accumulation at resected ends, thereby inhibiting homology-recombination repair (HR) pathway (PubMed:25642960, PubMed:25642963, PubMed:29058711). Also shows RNA-directed DNA polymerase activity to mediate DNA repair in vitro; however this activity needs additional evidence in vivo (By similarity). May also have lyase activity (By similarity). Involved in somatic hypermutation of immunoglobulin genes, a process that requires the activity of DNA polymerases to ultimately introduce mutations at both A/T and C/G base pairs (PubMed:16172387, PubMed:16222339, PubMed:16890500, PubMed:17449470). However, POLQ does not play a major role in somatic hypermutation (PubMed:18485835). POLQ-mediated end joining activity is involved in random integration of exogenous DNA hampers (PubMed:28687761).</text>
</comment>
<comment type="catalytic activity">
    <reaction evidence="19">
        <text>DNA(n) + a 2'-deoxyribonucleoside 5'-triphosphate = DNA(n+1) + diphosphate</text>
        <dbReference type="Rhea" id="RHEA:22508"/>
        <dbReference type="Rhea" id="RHEA-COMP:17339"/>
        <dbReference type="Rhea" id="RHEA-COMP:17340"/>
        <dbReference type="ChEBI" id="CHEBI:33019"/>
        <dbReference type="ChEBI" id="CHEBI:61560"/>
        <dbReference type="ChEBI" id="CHEBI:173112"/>
        <dbReference type="EC" id="2.7.7.7"/>
    </reaction>
</comment>
<comment type="catalytic activity">
    <reaction evidence="19">
        <text>ATP + H2O = ADP + phosphate + H(+)</text>
        <dbReference type="Rhea" id="RHEA:13065"/>
        <dbReference type="ChEBI" id="CHEBI:15377"/>
        <dbReference type="ChEBI" id="CHEBI:15378"/>
        <dbReference type="ChEBI" id="CHEBI:30616"/>
        <dbReference type="ChEBI" id="CHEBI:43474"/>
        <dbReference type="ChEBI" id="CHEBI:456216"/>
        <dbReference type="EC" id="3.6.4.12"/>
    </reaction>
</comment>
<comment type="catalytic activity">
    <reaction evidence="2">
        <text>DNA(n) + a 2'-deoxyribonucleoside 5'-triphosphate = DNA(n+1) + diphosphate</text>
        <dbReference type="Rhea" id="RHEA:22508"/>
        <dbReference type="Rhea" id="RHEA-COMP:17339"/>
        <dbReference type="Rhea" id="RHEA-COMP:17340"/>
        <dbReference type="ChEBI" id="CHEBI:33019"/>
        <dbReference type="ChEBI" id="CHEBI:61560"/>
        <dbReference type="ChEBI" id="CHEBI:173112"/>
        <dbReference type="EC" id="2.7.7.49"/>
    </reaction>
</comment>
<comment type="cofactor">
    <cofactor evidence="2">
        <name>Mg(2+)</name>
        <dbReference type="ChEBI" id="CHEBI:18420"/>
    </cofactor>
</comment>
<comment type="subunit">
    <text evidence="2">Homomultimer; forms homodimers and homotetramers. Interacts with RAD51. Interacts with ORC2 and ORC4. Interacts with RHNO1; interaction takes place during mitosis and promotes POLQ recruitment to DNA damage sites. Interacts (when phosphorylated) with TOPBP1 (via BRCT domains 7 and 8); promoting POLQ recruitment to DNA damage sites.</text>
</comment>
<comment type="subcellular location">
    <subcellularLocation>
        <location evidence="1">Nucleus</location>
    </subcellularLocation>
    <subcellularLocation>
        <location evidence="2">Chromosome</location>
    </subcellularLocation>
    <text evidence="2">Enriched in chromatin in response to ultaviolet (UV) light. Binds to chromatin during early G1. Recruited to DNA damage sites, such as double-stranded breaks (DSBs), following interaction with TOPBP1 and RHNO1.</text>
</comment>
<comment type="alternative products">
    <event type="alternative splicing"/>
    <isoform>
        <id>Q8CGS6-1</id>
        <name>1</name>
        <sequence type="displayed"/>
    </isoform>
    <isoform>
        <id>Q8CGS6-2</id>
        <name>2</name>
        <sequence type="described" ref="VSP_057561"/>
    </isoform>
</comment>
<comment type="domain">
    <text evidence="2">The loop 2 region is involved in the binding of the 2 ends of resected double-strand breaks and homomultimerization.</text>
</comment>
<comment type="PTM">
    <text evidence="2">Phosphorylated by PLK1; promoting interaction with TOPBP1 and recruitment to DNA damage sites.</text>
</comment>
<comment type="disruption phenotype">
    <text evidence="6 7 11 13 16">Mice develop normally, but show elevated frequencies of spontaneous and radiation-induced micronuclei, due to an increased frequency of chromosomal breakage (PubMed:12663541, PubMed:15542845, PubMed:19630521). Mice display a 20% reduction of both A/T and C/G mutations during somatic hypermutation of immunoglobulin genes (PubMed:17449470). Mice lacking both Polh and Polq do not show a further decrease of A/T mutations as compared with mice lacking only Polh (PubMed:17449470). Mice lacking both Fancd2 and Polq die during embryogenesis (PubMed:25642960).</text>
</comment>
<comment type="similarity">
    <text evidence="25">Belongs to the DNA polymerase type-A family.</text>
</comment>
<feature type="chain" id="PRO_0000432702" description="DNA polymerase theta">
    <location>
        <begin position="1"/>
        <end position="2544"/>
    </location>
</feature>
<feature type="domain" description="Helicase ATP-binding" evidence="3">
    <location>
        <begin position="101"/>
        <end position="285"/>
    </location>
</feature>
<feature type="domain" description="Helicase C-terminal" evidence="4">
    <location>
        <begin position="320"/>
        <end position="551"/>
    </location>
</feature>
<feature type="region of interest" description="Disordered" evidence="5">
    <location>
        <begin position="1"/>
        <end position="57"/>
    </location>
</feature>
<feature type="region of interest" description="Helicase activity" evidence="25">
    <location>
        <begin position="101"/>
        <end position="551"/>
    </location>
</feature>
<feature type="region of interest" description="Interaction with RAD51" evidence="2">
    <location>
        <begin position="844"/>
        <end position="890"/>
    </location>
</feature>
<feature type="region of interest" description="Disordered" evidence="5">
    <location>
        <begin position="896"/>
        <end position="955"/>
    </location>
</feature>
<feature type="region of interest" description="Disordered" evidence="5">
    <location>
        <begin position="1022"/>
        <end position="1058"/>
    </location>
</feature>
<feature type="region of interest" description="Disordered" evidence="5">
    <location>
        <begin position="1128"/>
        <end position="1167"/>
    </location>
</feature>
<feature type="region of interest" description="Disordered" evidence="5">
    <location>
        <begin position="1266"/>
        <end position="1288"/>
    </location>
</feature>
<feature type="region of interest" description="Disordered" evidence="5">
    <location>
        <begin position="1331"/>
        <end position="1353"/>
    </location>
</feature>
<feature type="region of interest" description="Disordered" evidence="5">
    <location>
        <begin position="1478"/>
        <end position="1501"/>
    </location>
</feature>
<feature type="region of interest" description="Disordered" evidence="5">
    <location>
        <begin position="1557"/>
        <end position="1591"/>
    </location>
</feature>
<feature type="region of interest" description="Disordered" evidence="5">
    <location>
        <begin position="1606"/>
        <end position="1697"/>
    </location>
</feature>
<feature type="region of interest" description="DNA polymerase activity" evidence="25">
    <location>
        <begin position="2052"/>
        <end position="2538"/>
    </location>
</feature>
<feature type="region of interest" description="Loop 1" evidence="2">
    <location>
        <begin position="2097"/>
        <end position="2132"/>
    </location>
</feature>
<feature type="region of interest" description="Disordered" evidence="5">
    <location>
        <begin position="2104"/>
        <end position="2124"/>
    </location>
</feature>
<feature type="region of interest" description="Loop 2" evidence="2">
    <location>
        <begin position="2212"/>
        <end position="2276"/>
    </location>
</feature>
<feature type="region of interest" description="Loop 3" evidence="2">
    <location>
        <begin position="2445"/>
        <end position="2489"/>
    </location>
</feature>
<feature type="short sequence motif" description="DEAH box" evidence="3">
    <location>
        <begin position="215"/>
        <end position="218"/>
    </location>
</feature>
<feature type="compositionally biased region" description="Basic residues" evidence="5">
    <location>
        <begin position="1"/>
        <end position="13"/>
    </location>
</feature>
<feature type="compositionally biased region" description="Low complexity" evidence="5">
    <location>
        <begin position="14"/>
        <end position="29"/>
    </location>
</feature>
<feature type="compositionally biased region" description="Low complexity" evidence="5">
    <location>
        <begin position="898"/>
        <end position="911"/>
    </location>
</feature>
<feature type="compositionally biased region" description="Polar residues" evidence="5">
    <location>
        <begin position="933"/>
        <end position="945"/>
    </location>
</feature>
<feature type="compositionally biased region" description="Basic and acidic residues" evidence="5">
    <location>
        <begin position="946"/>
        <end position="955"/>
    </location>
</feature>
<feature type="compositionally biased region" description="Polar residues" evidence="5">
    <location>
        <begin position="1022"/>
        <end position="1034"/>
    </location>
</feature>
<feature type="compositionally biased region" description="Low complexity" evidence="5">
    <location>
        <begin position="1128"/>
        <end position="1139"/>
    </location>
</feature>
<feature type="compositionally biased region" description="Basic and acidic residues" evidence="5">
    <location>
        <begin position="1140"/>
        <end position="1155"/>
    </location>
</feature>
<feature type="compositionally biased region" description="Polar residues" evidence="5">
    <location>
        <begin position="1492"/>
        <end position="1501"/>
    </location>
</feature>
<feature type="compositionally biased region" description="Polar residues" evidence="5">
    <location>
        <begin position="1578"/>
        <end position="1591"/>
    </location>
</feature>
<feature type="compositionally biased region" description="Basic and acidic residues" evidence="5">
    <location>
        <begin position="1606"/>
        <end position="1616"/>
    </location>
</feature>
<feature type="compositionally biased region" description="Basic and acidic residues" evidence="5">
    <location>
        <begin position="1628"/>
        <end position="1638"/>
    </location>
</feature>
<feature type="compositionally biased region" description="Polar residues" evidence="5">
    <location>
        <begin position="1641"/>
        <end position="1652"/>
    </location>
</feature>
<feature type="compositionally biased region" description="Basic and acidic residues" evidence="5">
    <location>
        <begin position="1656"/>
        <end position="1667"/>
    </location>
</feature>
<feature type="compositionally biased region" description="Polar residues" evidence="5">
    <location>
        <begin position="2104"/>
        <end position="2117"/>
    </location>
</feature>
<feature type="active site" description="For DNA polymerase activity" evidence="2">
    <location>
        <position position="2284"/>
    </location>
</feature>
<feature type="binding site" evidence="2">
    <location>
        <position position="95"/>
    </location>
    <ligand>
        <name>ATP</name>
        <dbReference type="ChEBI" id="CHEBI:30616"/>
    </ligand>
</feature>
<feature type="binding site" evidence="3">
    <location>
        <begin position="114"/>
        <end position="121"/>
    </location>
    <ligand>
        <name>ATP</name>
        <dbReference type="ChEBI" id="CHEBI:30616"/>
    </ligand>
</feature>
<feature type="binding site" evidence="2">
    <location>
        <position position="2284"/>
    </location>
    <ligand>
        <name>Mg(2+)</name>
        <dbReference type="ChEBI" id="CHEBI:18420"/>
    </ligand>
</feature>
<feature type="binding site" evidence="2">
    <location>
        <position position="2285"/>
    </location>
    <ligand>
        <name>Mg(2+)</name>
        <dbReference type="ChEBI" id="CHEBI:18420"/>
    </ligand>
</feature>
<feature type="binding site" evidence="2">
    <location>
        <position position="2494"/>
    </location>
    <ligand>
        <name>Mg(2+)</name>
        <dbReference type="ChEBI" id="CHEBI:18420"/>
    </ligand>
</feature>
<feature type="modified residue" description="N6-acetyllysine" evidence="2">
    <location>
        <position position="983"/>
    </location>
</feature>
<feature type="modified residue" description="Phosphoserine" evidence="2">
    <location>
        <position position="1265"/>
    </location>
</feature>
<feature type="modified residue" description="Phosphoserine" evidence="2">
    <location>
        <position position="1438"/>
    </location>
</feature>
<feature type="modified residue" description="Phosphoserine" evidence="2">
    <location>
        <position position="1442"/>
    </location>
</feature>
<feature type="modified residue" description="Phosphoserine" evidence="2">
    <location>
        <position position="1444"/>
    </location>
</feature>
<feature type="modified residue" description="Phosphoserine" evidence="2">
    <location>
        <position position="1449"/>
    </location>
</feature>
<feature type="modified residue" description="Phosphoserine" evidence="2">
    <location>
        <position position="1511"/>
    </location>
</feature>
<feature type="modified residue" description="Phosphoserine" evidence="2">
    <location>
        <position position="1519"/>
    </location>
</feature>
<feature type="modified residue" description="Phosphoserine" evidence="2">
    <location>
        <position position="1585"/>
    </location>
</feature>
<feature type="modified residue" description="Phosphoserine" evidence="2">
    <location>
        <position position="1592"/>
    </location>
</feature>
<feature type="modified residue" description="Phosphothreonine" evidence="2">
    <location>
        <position position="1710"/>
    </location>
</feature>
<feature type="splice variant" id="VSP_057561" description="In isoform 2." evidence="23">
    <location>
        <begin position="210"/>
        <end position="488"/>
    </location>
</feature>
<feature type="mutagenesis site" description="Abolished helicase activity." evidence="19">
    <original>K</original>
    <variation>G</variation>
    <location>
        <position position="120"/>
    </location>
</feature>
<feature type="mutagenesis site" description="Abolishes ATP-binding in the helicase domain without affecting the ability to confer resistance to DNA damage." evidence="15">
    <original>K</original>
    <variation>M</variation>
    <location>
        <position position="120"/>
    </location>
</feature>
<feature type="mutagenesis site" description="In chaos1; mice display higher frequencies of spontaneous and radiation- or mitomycin C-induced micronucleated erythrocytes." evidence="7">
    <original>S</original>
    <variation>P</variation>
    <location>
        <position position="1932"/>
    </location>
</feature>
<feature type="mutagenesis site" description="Abolishes DNA polymerase activity and ability to confer resistance to DNA damage." evidence="15 16">
    <original>DE</original>
    <variation>AA</variation>
    <location>
        <begin position="2494"/>
        <end position="2495"/>
    </location>
</feature>
<feature type="mutagenesis site" description="Abolished DNA polymerase activity." evidence="19">
    <original>DE</original>
    <variation>PR</variation>
    <location>
        <begin position="2494"/>
        <end position="2495"/>
    </location>
</feature>
<name>DPOLQ_MOUSE</name>
<gene>
    <name evidence="24 26" type="primary">Polq</name>
    <name evidence="23 24" type="synonym">Chaos1</name>
</gene>
<proteinExistence type="evidence at protein level"/>
<accession>Q8CGS6</accession>
<accession>Q3UTE0</accession>
<keyword id="KW-0007">Acetylation</keyword>
<keyword id="KW-0025">Alternative splicing</keyword>
<keyword id="KW-0067">ATP-binding</keyword>
<keyword id="KW-0158">Chromosome</keyword>
<keyword id="KW-0227">DNA damage</keyword>
<keyword id="KW-0234">DNA repair</keyword>
<keyword id="KW-0239">DNA-directed DNA polymerase</keyword>
<keyword id="KW-0347">Helicase</keyword>
<keyword id="KW-0378">Hydrolase</keyword>
<keyword id="KW-0460">Magnesium</keyword>
<keyword id="KW-0479">Metal-binding</keyword>
<keyword id="KW-0511">Multifunctional enzyme</keyword>
<keyword id="KW-0547">Nucleotide-binding</keyword>
<keyword id="KW-0548">Nucleotidyltransferase</keyword>
<keyword id="KW-0539">Nucleus</keyword>
<keyword id="KW-0597">Phosphoprotein</keyword>
<keyword id="KW-1185">Reference proteome</keyword>
<keyword id="KW-0808">Transferase</keyword>
<sequence length="2544" mass="280714">MSLPRRSRKRRRSSSGSDTFSGDGDSFVSPQLRCGPVLSPPPGLGRGRRLTGTGTNKRRVSDDQIDQLLLANWGLPKAVLEKYHSFGVRKMFEWQAECLLLGHVLEGKNLVYSAPTSAGKTLVAELLILKRVLETRKKALFILPFVSVAKEKKCYLQSLFQEVGLKVDGYMGSTSPTGQFSSLDIAVCTIERANGLVNRLIEENKMDLLGMVVVDELHMLGDSHRGYLLELLLTKICYVTRKSASHQAESASTLSNAVQIVGMSATLPNLQLVASWLNAELYHTDFRPVPLLESIKIGNSIYDSSMKLVREFQPLLQVKGDEDHIVSLCYETIQDNHSVLIFCPSKKWCEKVADIIAREFYNLHHQPEGLVKSSEFPPVILDQKSLLEVMDQLKRSPSGLDSVLKNTVPWGVAFHHAGLTFEERDIIEGAFRQGFIRVLAATSTLSSGVNLPARRVIIRTPIFSGQPLDILTYKQMVGRAGRKGVDTMGESILVCKNSEKSKGIALLQGSLEPVHSCLQRQGEVTASMIRAILEIIVGGVASTSQDMQTYAACTFLAAAIQEGKQGMQRNQDDAQLGAIDACVTWLLENEFIQVAEPGDGTGGKVYHPTHLGSATLSSSLSPTDTLDIFADLQRAMKGFVLENDLHIVYLVTPVFEDWISIDWYRFFCLWEKLPTSMKRVAELVGVEEGFLARCVKGKVVARTERQHRQMAIHKRFFTSLVLLDLISEIPLKDINQKYGCNRGQIQSLQQSAAVYAGMITVFSNRLGWHNMELLLSQFQKRLTFGIQRELCDLIRVSLLNAQRARFLYASGFLTVADLARADSAEVEVALKNSLPFKSARKAVDEEEEAAEERRSMRTIWVTGKGLSAREAAALIVEEAKMILQQDLIEMGVRWDPKSPLSSSTHSRTSTSEVKEHTFKSQTKSSHKRLASMGRNSIRASGSNDKPSPDAERGIDDCSEHADSLCKFQGNFEPQTPSICTARKRTSLGINKEMLRKSLKEGKPSTKEVLQTFSSEKTRKTALSFSSEQVNNTLPSGRDRKYQKKSWGSSPVRDSGMHRGDLQGQTMCTSALCEDSQKSLEEQNAEFRSPGLFAKHLPSCAKEKCKKPSLPLQRQQACSRRSTESCAAVGHPAAGSSPAAARDRRGLAARETEKGNEALTENGGESQLQDTYPVSQYLEYHSEKHTNTCTRQKTLTEGQAGSSYVARDSNDAAPIKCERMKLNSKDRDSNPCRQALGSYTGRTEALQSTAKLGQAGGQCENLLNSSGVQGKTGAHATNRTEHSHASNPAFCDFGDSLDLDTQSEEIIEQMATENTMQGAKAVVIMEEGSAMQNKCHSTPGDQHVPGAANTDHVDSKKVESVKANTEKNINRGAPVSLIFHTQGENGACFKGNEHSVTDSQLNSFLQGFETQEIVKPIIPLAPQMRTPTGVEEESLPETSLNMSDSILFDSFGEDGFGQGQSPDIKANQPLLSEMTPNHFSNPPHPQEDPVMTPTVSEPQGTQQQGVCLSGESIIFSDIDSAQVIEALDNMAAFHVQENCNSVALKTLEPSDSAVLGNECPQGKLVRGDQNEGSPKPKLTETNQDNSFTWSGASFNLSPELQRILDKVSSPRENEKPKMIHVNLSSFEGNSKESHEREEINSDLGTVQRTSVFPSNEVKNRTEGLESKARHGGASSPLPRKESAAADDNGLIPPTPVPASASKVAFPEILGTSVKRQKASSALQPGESCLFGSPSDNQNQDLSQELRDSLKDYDGSVADTSFFLQSQDGLLLTQASCSSESLAIIDVASDQILFQTFVKEWQCQKRFSISLACEKMTSSMSSKTATIGGKLKQVSLPQEATVEDAGFPVRGCDGAVVVGLAVCWGAKDAYYLSLQKEQKQSEISPSLAPPPLDATLTVKERMECLQSCLQKKSDRERSVVTYDFIQTYKVLLLSCGISLEPSYEDPKVACWLLDPDSKEPTLHSIVTSFLPHELALLEGMETGPGIQSLGLNVNTEHSGRYRASVESVLIFNSMNQLNSLLQKENLHDIFCKVEMPSQYCLALLELNGIGFSTAECESQKHVMQAKLDAIETQAYQLAGHSFSFTSADDIAQVLFLELKLPPNGEMKTQGSKKTLGSTRRGNESGRRMRLGRQFSTSKDILNKLKGLHPLPGLILEWRRISNAITKVVFPLQREKHLNPLLRMERIYPVSQSHTATGRITFTEPNIQNVPRDFEIKMPTLVRESPPSQAPKGRFPMAIGQDKKVYGLHPGHRTQMEEKASDRGVPFSVSMRHAFVPFPGGLILAADYSQLELRILAHLSRDCRLIQVLNTGADVFRSIAAEWKMIEPDAVGDDLRQHAKQICYGIIYGMGAKSLGEQMGIKENDAASYIDSFKSRYKGINHFMRDTVKNCRKNGFVETILGRRRYLPGIKDDNPYHKAHAERQAINTTVQGSAADIVKIATVNIQKQLETFRSTFKSHGHRESMLQNDRTGLLPKRKLKGMFCPMRGGFFILQLHDELLYEVAEEDVVQVAQIVKNEMECAIKLSVKLKVKVKIGASWGELKDFDV</sequence>
<dbReference type="EC" id="3.6.4.12" evidence="19"/>
<dbReference type="EC" id="2.7.7.7" evidence="19"/>
<dbReference type="EC" id="2.7.7.49" evidence="2"/>
<dbReference type="EMBL" id="AY147862">
    <property type="protein sequence ID" value="AAN64234.1"/>
    <property type="molecule type" value="mRNA"/>
</dbReference>
<dbReference type="EMBL" id="AC154763">
    <property type="status" value="NOT_ANNOTATED_CDS"/>
    <property type="molecule type" value="Genomic_DNA"/>
</dbReference>
<dbReference type="EMBL" id="AC155254">
    <property type="status" value="NOT_ANNOTATED_CDS"/>
    <property type="molecule type" value="Genomic_DNA"/>
</dbReference>
<dbReference type="EMBL" id="AK139505">
    <property type="protein sequence ID" value="BAE24040.1"/>
    <property type="molecule type" value="mRNA"/>
</dbReference>
<dbReference type="CCDS" id="CCDS28158.1">
    <molecule id="Q8CGS6-1"/>
</dbReference>
<dbReference type="CCDS" id="CCDS49845.1">
    <molecule id="Q8CGS6-2"/>
</dbReference>
<dbReference type="RefSeq" id="NP_001152841.1">
    <molecule id="Q8CGS6-2"/>
    <property type="nucleotide sequence ID" value="NM_001159369.1"/>
</dbReference>
<dbReference type="RefSeq" id="NP_084253.1">
    <molecule id="Q8CGS6-1"/>
    <property type="nucleotide sequence ID" value="NM_029977.2"/>
</dbReference>
<dbReference type="SMR" id="Q8CGS6"/>
<dbReference type="FunCoup" id="Q8CGS6">
    <property type="interactions" value="2619"/>
</dbReference>
<dbReference type="STRING" id="10090.ENSMUSP00000059757"/>
<dbReference type="GlyGen" id="Q8CGS6">
    <property type="glycosylation" value="1 site"/>
</dbReference>
<dbReference type="iPTMnet" id="Q8CGS6"/>
<dbReference type="PhosphoSitePlus" id="Q8CGS6"/>
<dbReference type="PaxDb" id="10090-ENSMUSP00000059757"/>
<dbReference type="ProteomicsDB" id="277597">
    <molecule id="Q8CGS6-1"/>
</dbReference>
<dbReference type="ProteomicsDB" id="277598">
    <molecule id="Q8CGS6-2"/>
</dbReference>
<dbReference type="Antibodypedia" id="32825">
    <property type="antibodies" value="75 antibodies from 23 providers"/>
</dbReference>
<dbReference type="DNASU" id="77782"/>
<dbReference type="Ensembl" id="ENSMUST00000054034.7">
    <molecule id="Q8CGS6-1"/>
    <property type="protein sequence ID" value="ENSMUSP00000059757.6"/>
    <property type="gene ID" value="ENSMUSG00000034206.16"/>
</dbReference>
<dbReference type="Ensembl" id="ENSMUST00000071452.12">
    <molecule id="Q8CGS6-2"/>
    <property type="protein sequence ID" value="ENSMUSP00000071396.5"/>
    <property type="gene ID" value="ENSMUSG00000034206.16"/>
</dbReference>
<dbReference type="GeneID" id="77782"/>
<dbReference type="KEGG" id="mmu:77782"/>
<dbReference type="UCSC" id="uc007zdo.2">
    <molecule id="Q8CGS6-1"/>
    <property type="organism name" value="mouse"/>
</dbReference>
<dbReference type="UCSC" id="uc007zdr.2">
    <property type="organism name" value="mouse"/>
</dbReference>
<dbReference type="AGR" id="MGI:2155399"/>
<dbReference type="CTD" id="10721"/>
<dbReference type="MGI" id="MGI:2155399">
    <property type="gene designation" value="Polq"/>
</dbReference>
<dbReference type="VEuPathDB" id="HostDB:ENSMUSG00000034206"/>
<dbReference type="eggNOG" id="KOG0950">
    <property type="taxonomic scope" value="Eukaryota"/>
</dbReference>
<dbReference type="GeneTree" id="ENSGT00940000158694"/>
<dbReference type="HOGENOM" id="CLU_000818_0_1_1"/>
<dbReference type="InParanoid" id="Q8CGS6"/>
<dbReference type="OMA" id="FHNMCQQ"/>
<dbReference type="OrthoDB" id="2320933at2759"/>
<dbReference type="PhylomeDB" id="Q8CGS6"/>
<dbReference type="Reactome" id="R-MMU-5685939">
    <property type="pathway name" value="HDR through MMEJ (alt-NHEJ)"/>
</dbReference>
<dbReference type="BioGRID-ORCS" id="77782">
    <property type="hits" value="22 hits in 113 CRISPR screens"/>
</dbReference>
<dbReference type="ChiTaRS" id="Polq">
    <property type="organism name" value="mouse"/>
</dbReference>
<dbReference type="PRO" id="PR:Q8CGS6"/>
<dbReference type="Proteomes" id="UP000000589">
    <property type="component" value="Chromosome 16"/>
</dbReference>
<dbReference type="RNAct" id="Q8CGS6">
    <property type="molecule type" value="protein"/>
</dbReference>
<dbReference type="Bgee" id="ENSMUSG00000034206">
    <property type="expression patterns" value="Expressed in embryonic post-anal tail and 69 other cell types or tissues"/>
</dbReference>
<dbReference type="ExpressionAtlas" id="Q8CGS6">
    <property type="expression patterns" value="baseline and differential"/>
</dbReference>
<dbReference type="GO" id="GO:0005829">
    <property type="term" value="C:cytosol"/>
    <property type="evidence" value="ECO:0007669"/>
    <property type="project" value="Ensembl"/>
</dbReference>
<dbReference type="GO" id="GO:0005794">
    <property type="term" value="C:Golgi apparatus"/>
    <property type="evidence" value="ECO:0007669"/>
    <property type="project" value="Ensembl"/>
</dbReference>
<dbReference type="GO" id="GO:0042645">
    <property type="term" value="C:mitochondrial nucleoid"/>
    <property type="evidence" value="ECO:0007669"/>
    <property type="project" value="Ensembl"/>
</dbReference>
<dbReference type="GO" id="GO:0005654">
    <property type="term" value="C:nucleoplasm"/>
    <property type="evidence" value="ECO:0007669"/>
    <property type="project" value="Ensembl"/>
</dbReference>
<dbReference type="GO" id="GO:0090734">
    <property type="term" value="C:site of DNA damage"/>
    <property type="evidence" value="ECO:0000250"/>
    <property type="project" value="UniProtKB"/>
</dbReference>
<dbReference type="GO" id="GO:0035861">
    <property type="term" value="C:site of double-strand break"/>
    <property type="evidence" value="ECO:0000250"/>
    <property type="project" value="UniProtKB"/>
</dbReference>
<dbReference type="GO" id="GO:0051575">
    <property type="term" value="F:5'-deoxyribose-5-phosphate lyase activity"/>
    <property type="evidence" value="ECO:0000250"/>
    <property type="project" value="UniProtKB"/>
</dbReference>
<dbReference type="GO" id="GO:0005524">
    <property type="term" value="F:ATP binding"/>
    <property type="evidence" value="ECO:0007669"/>
    <property type="project" value="UniProtKB-KW"/>
</dbReference>
<dbReference type="GO" id="GO:0016887">
    <property type="term" value="F:ATP hydrolysis activity"/>
    <property type="evidence" value="ECO:0007669"/>
    <property type="project" value="RHEA"/>
</dbReference>
<dbReference type="GO" id="GO:0003682">
    <property type="term" value="F:chromatin binding"/>
    <property type="evidence" value="ECO:0000250"/>
    <property type="project" value="UniProtKB"/>
</dbReference>
<dbReference type="GO" id="GO:0003677">
    <property type="term" value="F:DNA binding"/>
    <property type="evidence" value="ECO:0007669"/>
    <property type="project" value="InterPro"/>
</dbReference>
<dbReference type="GO" id="GO:0003678">
    <property type="term" value="F:DNA helicase activity"/>
    <property type="evidence" value="ECO:0000314"/>
    <property type="project" value="UniProtKB"/>
</dbReference>
<dbReference type="GO" id="GO:0003887">
    <property type="term" value="F:DNA-directed DNA polymerase activity"/>
    <property type="evidence" value="ECO:0000314"/>
    <property type="project" value="UniProtKB"/>
</dbReference>
<dbReference type="GO" id="GO:0000287">
    <property type="term" value="F:magnesium ion binding"/>
    <property type="evidence" value="ECO:0007669"/>
    <property type="project" value="Ensembl"/>
</dbReference>
<dbReference type="GO" id="GO:0017116">
    <property type="term" value="F:single-stranded DNA helicase activity"/>
    <property type="evidence" value="ECO:0007669"/>
    <property type="project" value="Ensembl"/>
</dbReference>
<dbReference type="GO" id="GO:0006284">
    <property type="term" value="P:base-excision repair"/>
    <property type="evidence" value="ECO:0000250"/>
    <property type="project" value="UniProtKB"/>
</dbReference>
<dbReference type="GO" id="GO:0006974">
    <property type="term" value="P:DNA damage response"/>
    <property type="evidence" value="ECO:0000250"/>
    <property type="project" value="UniProtKB"/>
</dbReference>
<dbReference type="GO" id="GO:0006281">
    <property type="term" value="P:DNA repair"/>
    <property type="evidence" value="ECO:0000315"/>
    <property type="project" value="MGI"/>
</dbReference>
<dbReference type="GO" id="GO:0006302">
    <property type="term" value="P:double-strand break repair"/>
    <property type="evidence" value="ECO:0000250"/>
    <property type="project" value="UniProtKB"/>
</dbReference>
<dbReference type="GO" id="GO:0097681">
    <property type="term" value="P:double-strand break repair via alternative nonhomologous end joining"/>
    <property type="evidence" value="ECO:0000314"/>
    <property type="project" value="UniProtKB"/>
</dbReference>
<dbReference type="GO" id="GO:0042276">
    <property type="term" value="P:error-prone translesion synthesis"/>
    <property type="evidence" value="ECO:0000250"/>
    <property type="project" value="UniProtKB"/>
</dbReference>
<dbReference type="GO" id="GO:2000042">
    <property type="term" value="P:negative regulation of double-strand break repair via homologous recombination"/>
    <property type="evidence" value="ECO:0000314"/>
    <property type="project" value="UniProtKB"/>
</dbReference>
<dbReference type="GO" id="GO:0051260">
    <property type="term" value="P:protein homooligomerization"/>
    <property type="evidence" value="ECO:0000250"/>
    <property type="project" value="UniProtKB"/>
</dbReference>
<dbReference type="GO" id="GO:0031297">
    <property type="term" value="P:replication fork processing"/>
    <property type="evidence" value="ECO:0000250"/>
    <property type="project" value="UniProtKB"/>
</dbReference>
<dbReference type="GO" id="GO:0016446">
    <property type="term" value="P:somatic hypermutation of immunoglobulin genes"/>
    <property type="evidence" value="ECO:0000315"/>
    <property type="project" value="UniProtKB"/>
</dbReference>
<dbReference type="CDD" id="cd18026">
    <property type="entry name" value="DEXHc_POLQ-like"/>
    <property type="match status" value="1"/>
</dbReference>
<dbReference type="CDD" id="cd08638">
    <property type="entry name" value="DNA_pol_A_theta"/>
    <property type="match status" value="1"/>
</dbReference>
<dbReference type="CDD" id="cd18795">
    <property type="entry name" value="SF2_C_Ski2"/>
    <property type="match status" value="1"/>
</dbReference>
<dbReference type="FunFam" id="1.10.3380.20:FF:000001">
    <property type="entry name" value="DNA polymerase theta"/>
    <property type="match status" value="1"/>
</dbReference>
<dbReference type="FunFam" id="3.30.420.10:FF:000066">
    <property type="entry name" value="DNA polymerase theta"/>
    <property type="match status" value="1"/>
</dbReference>
<dbReference type="FunFam" id="3.40.50.300:FF:000885">
    <property type="entry name" value="DNA polymerase theta"/>
    <property type="match status" value="1"/>
</dbReference>
<dbReference type="FunFam" id="1.10.150.20:FF:000036">
    <property type="entry name" value="Polymerase (DNA directed), theta"/>
    <property type="match status" value="1"/>
</dbReference>
<dbReference type="FunFam" id="1.20.1060.10:FF:000002">
    <property type="entry name" value="Polymerase (DNA directed), theta"/>
    <property type="match status" value="1"/>
</dbReference>
<dbReference type="FunFam" id="3.40.50.300:FF:000753">
    <property type="entry name" value="Polymerase (DNA directed), theta"/>
    <property type="match status" value="1"/>
</dbReference>
<dbReference type="Gene3D" id="1.10.3380.20">
    <property type="match status" value="1"/>
</dbReference>
<dbReference type="Gene3D" id="3.30.70.370">
    <property type="match status" value="1"/>
</dbReference>
<dbReference type="Gene3D" id="1.10.150.20">
    <property type="entry name" value="5' to 3' exonuclease, C-terminal subdomain"/>
    <property type="match status" value="1"/>
</dbReference>
<dbReference type="Gene3D" id="3.40.50.300">
    <property type="entry name" value="P-loop containing nucleotide triphosphate hydrolases"/>
    <property type="match status" value="2"/>
</dbReference>
<dbReference type="Gene3D" id="3.30.420.10">
    <property type="entry name" value="Ribonuclease H-like superfamily/Ribonuclease H"/>
    <property type="match status" value="1"/>
</dbReference>
<dbReference type="Gene3D" id="1.20.1060.10">
    <property type="entry name" value="Taq DNA Polymerase, Chain T, domain 4"/>
    <property type="match status" value="1"/>
</dbReference>
<dbReference type="InterPro" id="IPR011545">
    <property type="entry name" value="DEAD/DEAH_box_helicase_dom"/>
</dbReference>
<dbReference type="InterPro" id="IPR019760">
    <property type="entry name" value="DNA-dir_DNA_pol_A_CS"/>
</dbReference>
<dbReference type="InterPro" id="IPR001098">
    <property type="entry name" value="DNA-dir_DNA_pol_A_palm_dom"/>
</dbReference>
<dbReference type="InterPro" id="IPR043502">
    <property type="entry name" value="DNA/RNA_pol_sf"/>
</dbReference>
<dbReference type="InterPro" id="IPR002298">
    <property type="entry name" value="DNA_polymerase_A"/>
</dbReference>
<dbReference type="InterPro" id="IPR014001">
    <property type="entry name" value="Helicase_ATP-bd"/>
</dbReference>
<dbReference type="InterPro" id="IPR001650">
    <property type="entry name" value="Helicase_C-like"/>
</dbReference>
<dbReference type="InterPro" id="IPR046931">
    <property type="entry name" value="HTH_61"/>
</dbReference>
<dbReference type="InterPro" id="IPR027417">
    <property type="entry name" value="P-loop_NTPase"/>
</dbReference>
<dbReference type="InterPro" id="IPR048960">
    <property type="entry name" value="POLQ-like_helical"/>
</dbReference>
<dbReference type="InterPro" id="IPR012337">
    <property type="entry name" value="RNaseH-like_sf"/>
</dbReference>
<dbReference type="InterPro" id="IPR036397">
    <property type="entry name" value="RNaseH_sf"/>
</dbReference>
<dbReference type="PANTHER" id="PTHR10133">
    <property type="entry name" value="DNA POLYMERASE I"/>
    <property type="match status" value="1"/>
</dbReference>
<dbReference type="PANTHER" id="PTHR10133:SF62">
    <property type="entry name" value="DNA POLYMERASE THETA"/>
    <property type="match status" value="1"/>
</dbReference>
<dbReference type="Pfam" id="PF00270">
    <property type="entry name" value="DEAD"/>
    <property type="match status" value="1"/>
</dbReference>
<dbReference type="Pfam" id="PF00476">
    <property type="entry name" value="DNA_pol_A"/>
    <property type="match status" value="1"/>
</dbReference>
<dbReference type="Pfam" id="PF00271">
    <property type="entry name" value="Helicase_C"/>
    <property type="match status" value="1"/>
</dbReference>
<dbReference type="Pfam" id="PF20470">
    <property type="entry name" value="HTH_61"/>
    <property type="match status" value="1"/>
</dbReference>
<dbReference type="Pfam" id="PF21099">
    <property type="entry name" value="POLQ_helical"/>
    <property type="match status" value="1"/>
</dbReference>
<dbReference type="PRINTS" id="PR00868">
    <property type="entry name" value="DNAPOLI"/>
</dbReference>
<dbReference type="SMART" id="SM00487">
    <property type="entry name" value="DEXDc"/>
    <property type="match status" value="1"/>
</dbReference>
<dbReference type="SMART" id="SM00490">
    <property type="entry name" value="HELICc"/>
    <property type="match status" value="1"/>
</dbReference>
<dbReference type="SMART" id="SM00482">
    <property type="entry name" value="POLAc"/>
    <property type="match status" value="1"/>
</dbReference>
<dbReference type="SUPFAM" id="SSF56672">
    <property type="entry name" value="DNA/RNA polymerases"/>
    <property type="match status" value="1"/>
</dbReference>
<dbReference type="SUPFAM" id="SSF52540">
    <property type="entry name" value="P-loop containing nucleoside triphosphate hydrolases"/>
    <property type="match status" value="1"/>
</dbReference>
<dbReference type="SUPFAM" id="SSF53098">
    <property type="entry name" value="Ribonuclease H-like"/>
    <property type="match status" value="1"/>
</dbReference>
<dbReference type="SUPFAM" id="SSF158702">
    <property type="entry name" value="Sec63 N-terminal domain-like"/>
    <property type="match status" value="1"/>
</dbReference>
<dbReference type="PROSITE" id="PS00447">
    <property type="entry name" value="DNA_POLYMERASE_A"/>
    <property type="match status" value="1"/>
</dbReference>
<dbReference type="PROSITE" id="PS51192">
    <property type="entry name" value="HELICASE_ATP_BIND_1"/>
    <property type="match status" value="1"/>
</dbReference>
<dbReference type="PROSITE" id="PS51194">
    <property type="entry name" value="HELICASE_CTER"/>
    <property type="match status" value="1"/>
</dbReference>
<evidence type="ECO:0000250" key="1">
    <source>
        <dbReference type="UniProtKB" id="O18475"/>
    </source>
</evidence>
<evidence type="ECO:0000250" key="2">
    <source>
        <dbReference type="UniProtKB" id="O75417"/>
    </source>
</evidence>
<evidence type="ECO:0000255" key="3">
    <source>
        <dbReference type="PROSITE-ProRule" id="PRU00541"/>
    </source>
</evidence>
<evidence type="ECO:0000255" key="4">
    <source>
        <dbReference type="PROSITE-ProRule" id="PRU00542"/>
    </source>
</evidence>
<evidence type="ECO:0000256" key="5">
    <source>
        <dbReference type="SAM" id="MobiDB-lite"/>
    </source>
</evidence>
<evidence type="ECO:0000269" key="6">
    <source>
    </source>
</evidence>
<evidence type="ECO:0000269" key="7">
    <source>
    </source>
</evidence>
<evidence type="ECO:0000269" key="8">
    <source>
    </source>
</evidence>
<evidence type="ECO:0000269" key="9">
    <source>
    </source>
</evidence>
<evidence type="ECO:0000269" key="10">
    <source>
    </source>
</evidence>
<evidence type="ECO:0000269" key="11">
    <source>
    </source>
</evidence>
<evidence type="ECO:0000269" key="12">
    <source>
    </source>
</evidence>
<evidence type="ECO:0000269" key="13">
    <source>
    </source>
</evidence>
<evidence type="ECO:0000269" key="14">
    <source>
    </source>
</evidence>
<evidence type="ECO:0000269" key="15">
    <source>
    </source>
</evidence>
<evidence type="ECO:0000269" key="16">
    <source>
    </source>
</evidence>
<evidence type="ECO:0000269" key="17">
    <source>
    </source>
</evidence>
<evidence type="ECO:0000269" key="18">
    <source>
    </source>
</evidence>
<evidence type="ECO:0000269" key="19">
    <source>
    </source>
</evidence>
<evidence type="ECO:0000269" key="20">
    <source>
    </source>
</evidence>
<evidence type="ECO:0000269" key="21">
    <source>
    </source>
</evidence>
<evidence type="ECO:0000269" key="22">
    <source>
    </source>
</evidence>
<evidence type="ECO:0000303" key="23">
    <source>
    </source>
</evidence>
<evidence type="ECO:0000303" key="24">
    <source>
    </source>
</evidence>
<evidence type="ECO:0000305" key="25"/>
<evidence type="ECO:0000312" key="26">
    <source>
        <dbReference type="MGI" id="MGI:2155399"/>
    </source>
</evidence>
<protein>
    <recommendedName>
        <fullName evidence="25">DNA polymerase theta</fullName>
    </recommendedName>
    <alternativeName>
        <fullName evidence="23 24">Chromosome aberrations occurring spontaneously protein 1</fullName>
    </alternativeName>
    <alternativeName>
        <fullName>DNA polymerase eta</fullName>
    </alternativeName>
    <domain>
        <recommendedName>
            <fullName evidence="25">Helicase POLQ</fullName>
            <ecNumber evidence="19">3.6.4.12</ecNumber>
        </recommendedName>
    </domain>
    <domain>
        <recommendedName>
            <fullName evidence="25">DNA polymerase POLQ</fullName>
            <ecNumber evidence="19">2.7.7.7</ecNumber>
        </recommendedName>
        <alternativeName>
            <fullName evidence="25">RNA-directed DNA polymerase POLQ</fullName>
            <ecNumber evidence="2">2.7.7.49</ecNumber>
        </alternativeName>
    </domain>
</protein>
<reference key="1">
    <citation type="journal article" date="2003" name="Genetics">
        <title>Phenotype-based identification of mouse chromosome instability mutants.</title>
        <authorList>
            <person name="Shima N."/>
            <person name="Hartford S.A."/>
            <person name="Duffy T."/>
            <person name="Wilson L.A."/>
            <person name="Schimenti K.J."/>
            <person name="Schimenti J.C."/>
        </authorList>
    </citation>
    <scope>NUCLEOTIDE SEQUENCE [MRNA] (ISOFORM 2)</scope>
    <scope>DISRUPTION PHENOTYPE</scope>
    <source>
        <strain>C57BL/6J</strain>
        <tissue>Testis</tissue>
    </source>
</reference>
<reference key="2">
    <citation type="journal article" date="2009" name="PLoS Biol.">
        <title>Lineage-specific biology revealed by a finished genome assembly of the mouse.</title>
        <authorList>
            <person name="Church D.M."/>
            <person name="Goodstadt L."/>
            <person name="Hillier L.W."/>
            <person name="Zody M.C."/>
            <person name="Goldstein S."/>
            <person name="She X."/>
            <person name="Bult C.J."/>
            <person name="Agarwala R."/>
            <person name="Cherry J.L."/>
            <person name="DiCuccio M."/>
            <person name="Hlavina W."/>
            <person name="Kapustin Y."/>
            <person name="Meric P."/>
            <person name="Maglott D."/>
            <person name="Birtle Z."/>
            <person name="Marques A.C."/>
            <person name="Graves T."/>
            <person name="Zhou S."/>
            <person name="Teague B."/>
            <person name="Potamousis K."/>
            <person name="Churas C."/>
            <person name="Place M."/>
            <person name="Herschleb J."/>
            <person name="Runnheim R."/>
            <person name="Forrest D."/>
            <person name="Amos-Landgraf J."/>
            <person name="Schwartz D.C."/>
            <person name="Cheng Z."/>
            <person name="Lindblad-Toh K."/>
            <person name="Eichler E.E."/>
            <person name="Ponting C.P."/>
        </authorList>
    </citation>
    <scope>NUCLEOTIDE SEQUENCE [LARGE SCALE GENOMIC DNA]</scope>
    <source>
        <strain>C57BL/6J</strain>
    </source>
</reference>
<reference key="3">
    <citation type="journal article" date="2005" name="Science">
        <title>The transcriptional landscape of the mammalian genome.</title>
        <authorList>
            <person name="Carninci P."/>
            <person name="Kasukawa T."/>
            <person name="Katayama S."/>
            <person name="Gough J."/>
            <person name="Frith M.C."/>
            <person name="Maeda N."/>
            <person name="Oyama R."/>
            <person name="Ravasi T."/>
            <person name="Lenhard B."/>
            <person name="Wells C."/>
            <person name="Kodzius R."/>
            <person name="Shimokawa K."/>
            <person name="Bajic V.B."/>
            <person name="Brenner S.E."/>
            <person name="Batalov S."/>
            <person name="Forrest A.R."/>
            <person name="Zavolan M."/>
            <person name="Davis M.J."/>
            <person name="Wilming L.G."/>
            <person name="Aidinis V."/>
            <person name="Allen J.E."/>
            <person name="Ambesi-Impiombato A."/>
            <person name="Apweiler R."/>
            <person name="Aturaliya R.N."/>
            <person name="Bailey T.L."/>
            <person name="Bansal M."/>
            <person name="Baxter L."/>
            <person name="Beisel K.W."/>
            <person name="Bersano T."/>
            <person name="Bono H."/>
            <person name="Chalk A.M."/>
            <person name="Chiu K.P."/>
            <person name="Choudhary V."/>
            <person name="Christoffels A."/>
            <person name="Clutterbuck D.R."/>
            <person name="Crowe M.L."/>
            <person name="Dalla E."/>
            <person name="Dalrymple B.P."/>
            <person name="de Bono B."/>
            <person name="Della Gatta G."/>
            <person name="di Bernardo D."/>
            <person name="Down T."/>
            <person name="Engstrom P."/>
            <person name="Fagiolini M."/>
            <person name="Faulkner G."/>
            <person name="Fletcher C.F."/>
            <person name="Fukushima T."/>
            <person name="Furuno M."/>
            <person name="Futaki S."/>
            <person name="Gariboldi M."/>
            <person name="Georgii-Hemming P."/>
            <person name="Gingeras T.R."/>
            <person name="Gojobori T."/>
            <person name="Green R.E."/>
            <person name="Gustincich S."/>
            <person name="Harbers M."/>
            <person name="Hayashi Y."/>
            <person name="Hensch T.K."/>
            <person name="Hirokawa N."/>
            <person name="Hill D."/>
            <person name="Huminiecki L."/>
            <person name="Iacono M."/>
            <person name="Ikeo K."/>
            <person name="Iwama A."/>
            <person name="Ishikawa T."/>
            <person name="Jakt M."/>
            <person name="Kanapin A."/>
            <person name="Katoh M."/>
            <person name="Kawasawa Y."/>
            <person name="Kelso J."/>
            <person name="Kitamura H."/>
            <person name="Kitano H."/>
            <person name="Kollias G."/>
            <person name="Krishnan S.P."/>
            <person name="Kruger A."/>
            <person name="Kummerfeld S.K."/>
            <person name="Kurochkin I.V."/>
            <person name="Lareau L.F."/>
            <person name="Lazarevic D."/>
            <person name="Lipovich L."/>
            <person name="Liu J."/>
            <person name="Liuni S."/>
            <person name="McWilliam S."/>
            <person name="Madan Babu M."/>
            <person name="Madera M."/>
            <person name="Marchionni L."/>
            <person name="Matsuda H."/>
            <person name="Matsuzawa S."/>
            <person name="Miki H."/>
            <person name="Mignone F."/>
            <person name="Miyake S."/>
            <person name="Morris K."/>
            <person name="Mottagui-Tabar S."/>
            <person name="Mulder N."/>
            <person name="Nakano N."/>
            <person name="Nakauchi H."/>
            <person name="Ng P."/>
            <person name="Nilsson R."/>
            <person name="Nishiguchi S."/>
            <person name="Nishikawa S."/>
            <person name="Nori F."/>
            <person name="Ohara O."/>
            <person name="Okazaki Y."/>
            <person name="Orlando V."/>
            <person name="Pang K.C."/>
            <person name="Pavan W.J."/>
            <person name="Pavesi G."/>
            <person name="Pesole G."/>
            <person name="Petrovsky N."/>
            <person name="Piazza S."/>
            <person name="Reed J."/>
            <person name="Reid J.F."/>
            <person name="Ring B.Z."/>
            <person name="Ringwald M."/>
            <person name="Rost B."/>
            <person name="Ruan Y."/>
            <person name="Salzberg S.L."/>
            <person name="Sandelin A."/>
            <person name="Schneider C."/>
            <person name="Schoenbach C."/>
            <person name="Sekiguchi K."/>
            <person name="Semple C.A."/>
            <person name="Seno S."/>
            <person name="Sessa L."/>
            <person name="Sheng Y."/>
            <person name="Shibata Y."/>
            <person name="Shimada H."/>
            <person name="Shimada K."/>
            <person name="Silva D."/>
            <person name="Sinclair B."/>
            <person name="Sperling S."/>
            <person name="Stupka E."/>
            <person name="Sugiura K."/>
            <person name="Sultana R."/>
            <person name="Takenaka Y."/>
            <person name="Taki K."/>
            <person name="Tammoja K."/>
            <person name="Tan S.L."/>
            <person name="Tang S."/>
            <person name="Taylor M.S."/>
            <person name="Tegner J."/>
            <person name="Teichmann S.A."/>
            <person name="Ueda H.R."/>
            <person name="van Nimwegen E."/>
            <person name="Verardo R."/>
            <person name="Wei C.L."/>
            <person name="Yagi K."/>
            <person name="Yamanishi H."/>
            <person name="Zabarovsky E."/>
            <person name="Zhu S."/>
            <person name="Zimmer A."/>
            <person name="Hide W."/>
            <person name="Bult C."/>
            <person name="Grimmond S.M."/>
            <person name="Teasdale R.D."/>
            <person name="Liu E.T."/>
            <person name="Brusic V."/>
            <person name="Quackenbush J."/>
            <person name="Wahlestedt C."/>
            <person name="Mattick J.S."/>
            <person name="Hume D.A."/>
            <person name="Kai C."/>
            <person name="Sasaki D."/>
            <person name="Tomaru Y."/>
            <person name="Fukuda S."/>
            <person name="Kanamori-Katayama M."/>
            <person name="Suzuki M."/>
            <person name="Aoki J."/>
            <person name="Arakawa T."/>
            <person name="Iida J."/>
            <person name="Imamura K."/>
            <person name="Itoh M."/>
            <person name="Kato T."/>
            <person name="Kawaji H."/>
            <person name="Kawagashira N."/>
            <person name="Kawashima T."/>
            <person name="Kojima M."/>
            <person name="Kondo S."/>
            <person name="Konno H."/>
            <person name="Nakano K."/>
            <person name="Ninomiya N."/>
            <person name="Nishio T."/>
            <person name="Okada M."/>
            <person name="Plessy C."/>
            <person name="Shibata K."/>
            <person name="Shiraki T."/>
            <person name="Suzuki S."/>
            <person name="Tagami M."/>
            <person name="Waki K."/>
            <person name="Watahiki A."/>
            <person name="Okamura-Oho Y."/>
            <person name="Suzuki H."/>
            <person name="Kawai J."/>
            <person name="Hayashizaki Y."/>
        </authorList>
    </citation>
    <scope>NUCLEOTIDE SEQUENCE [LARGE SCALE MRNA] OF 2246-2544</scope>
    <source>
        <strain>C57BL/6J</strain>
        <tissue>Egg</tissue>
    </source>
</reference>
<reference key="4">
    <citation type="journal article" date="2004" name="Mol. Cell. Biol.">
        <title>The mouse genomic instability mutation chaos1 is an allele of Polq that exhibits genetic interaction with Atm.</title>
        <authorList>
            <person name="Shima N."/>
            <person name="Munroe R.J."/>
            <person name="Schimenti J.C."/>
        </authorList>
    </citation>
    <scope>DISRUPTION PHENOTYPE</scope>
    <scope>MUTAGENESIS OF SER-1932</scope>
</reference>
<reference key="5">
    <citation type="journal article" date="2005" name="EMBO J.">
        <title>The translesion DNA polymerase theta plays a dominant role in immunoglobulin gene somatic hypermutation.</title>
        <authorList>
            <person name="Zan H."/>
            <person name="Shima N."/>
            <person name="Xu Z."/>
            <person name="Al-Qahtani A."/>
            <person name="Evinger Iii A.J."/>
            <person name="Zhong Y."/>
            <person name="Schimenti J.C."/>
            <person name="Casali P."/>
        </authorList>
    </citation>
    <scope>FUNCTION</scope>
</reference>
<reference key="6">
    <citation type="journal article" date="2005" name="Proc. Natl. Acad. Sci. U.S.A.">
        <title>DNA polymerase theta contributes to the generation of C/G mutations during somatic hypermutation of Ig genes.</title>
        <authorList>
            <person name="Masuda K."/>
            <person name="Ouchida R."/>
            <person name="Takeuchi A."/>
            <person name="Saito T."/>
            <person name="Koseki H."/>
            <person name="Kawamura K."/>
            <person name="Tagawa M."/>
            <person name="Tokuhisa T."/>
            <person name="Azuma T."/>
            <person name="O-Wang J."/>
        </authorList>
    </citation>
    <scope>FUNCTION</scope>
</reference>
<reference key="7">
    <citation type="journal article" date="2006" name="DNA Repair">
        <title>Absence of DNA polymerase theta results in decreased somatic hypermutation frequency and altered mutation patterns in Ig genes.</title>
        <authorList>
            <person name="Masuda K."/>
            <person name="Ouchida R."/>
            <person name="Hikida M."/>
            <person name="Nakayama M."/>
            <person name="Ohara O."/>
            <person name="Kurosaki T."/>
            <person name="O-Wang J."/>
        </authorList>
    </citation>
    <scope>FUNCTION</scope>
</reference>
<reference key="8">
    <citation type="journal article" date="2007" name="J. Biol. Chem.">
        <title>DNA polymerases eta and theta function in the same genetic pathway to generate mutations at A/T during somatic hypermutation of Ig genes.</title>
        <authorList>
            <person name="Masuda K."/>
            <person name="Ouchida R."/>
            <person name="Hikida M."/>
            <person name="Kurosaki T."/>
            <person name="Yokoi M."/>
            <person name="Masutani C."/>
            <person name="Seki M."/>
            <person name="Wood R.D."/>
            <person name="Hanaoka F."/>
            <person name="O-Wang J."/>
        </authorList>
    </citation>
    <scope>FUNCTION</scope>
    <scope>DISRUPTION PHENOTYPE</scope>
</reference>
<reference key="9">
    <citation type="journal article" date="2008" name="DNA Repair">
        <title>Reevaluation of the role of DNA polymerase theta in somatic hypermutation of immunoglobulin genes.</title>
        <authorList>
            <person name="Martomo S.A."/>
            <person name="Saribasak H."/>
            <person name="Yokoi M."/>
            <person name="Hanaoka F."/>
            <person name="Gearhart P.J."/>
        </authorList>
    </citation>
    <scope>FUNCTION</scope>
</reference>
<reference key="10">
    <citation type="journal article" date="2009" name="Radiat. Res.">
        <title>Lack of DNA polymerase theta (POLQ) radiosensitizes bone marrow stromal cells in vitro and increases reticulocyte micronuclei after total-body irradiation.</title>
        <authorList>
            <person name="Goff J.P."/>
            <person name="Shields D.S."/>
            <person name="Seki M."/>
            <person name="Choi S."/>
            <person name="Epperly M.W."/>
            <person name="Dixon T."/>
            <person name="Wang H."/>
            <person name="Bakkenist C.J."/>
            <person name="Dertinger S.D."/>
            <person name="Torous D.K."/>
            <person name="Wittschieben J."/>
            <person name="Wood R.D."/>
            <person name="Greenberger J.S."/>
        </authorList>
    </citation>
    <scope>DISRUPTION PHENOTYPE</scope>
</reference>
<reference key="11">
    <citation type="journal article" date="2011" name="Genes Cells">
        <title>Comparison of two POLQ mutants reveals that a polymerase-inactive POLQ retains significant function in tolerance to etoposide and gamma-irradiation in mouse B cells.</title>
        <authorList>
            <person name="Li Y."/>
            <person name="Gao X."/>
            <person name="Wang J.Y."/>
        </authorList>
    </citation>
    <scope>FUNCTION</scope>
</reference>
<reference key="12">
    <citation type="journal article" date="2014" name="PLoS Genet.">
        <title>Mechanism of suppression of chromosomal instability by DNA polymerase POLQ.</title>
        <authorList>
            <person name="Yousefzadeh M.J."/>
            <person name="Wyatt D.W."/>
            <person name="Takata K."/>
            <person name="Mu Y."/>
            <person name="Hensley S.C."/>
            <person name="Tomida J."/>
            <person name="Bylund G.O."/>
            <person name="Doublie S."/>
            <person name="Johansson E."/>
            <person name="Ramsden D.A."/>
            <person name="McBride K.M."/>
            <person name="Wood R.D."/>
        </authorList>
    </citation>
    <scope>FUNCTION</scope>
    <scope>MUTAGENESIS OF LYS-120 AND 2494-ASP-GLU-2495</scope>
</reference>
<reference key="13">
    <citation type="journal article" date="2015" name="Nature">
        <title>Homologous-recombination-deficient tumours are dependent on Poltheta-mediated repair.</title>
        <authorList>
            <person name="Ceccaldi R."/>
            <person name="Liu J.C."/>
            <person name="Amunugama R."/>
            <person name="Hajdu I."/>
            <person name="Primack B."/>
            <person name="Petalcorin M.I."/>
            <person name="O'Connor K.W."/>
            <person name="Konstantinopoulos P.A."/>
            <person name="Elledge S.J."/>
            <person name="Boulton S.J."/>
            <person name="Yusufzai T."/>
            <person name="D'Andrea A.D."/>
        </authorList>
    </citation>
    <scope>FUNCTION</scope>
    <scope>DISRUPTION PHENOTYPE</scope>
</reference>
<reference key="14">
    <citation type="journal article" date="2015" name="Nature">
        <title>Mammalian polymerase theta promotes alternative NHEJ and suppresses recombination.</title>
        <authorList>
            <person name="Mateos-Gomez P.A."/>
            <person name="Gong F."/>
            <person name="Nair N."/>
            <person name="Miller K.M."/>
            <person name="Lazzerini-Denchi E."/>
            <person name="Sfeir A."/>
        </authorList>
    </citation>
    <scope>FUNCTION</scope>
    <scope>MUTAGENESIS OF 2494-ASP-GLU-2495</scope>
</reference>
<reference key="15">
    <citation type="journal article" date="2017" name="EMBO J.">
        <title>Mutational signatures of non-homologous and polymerase theta-mediated end-joining in embryonic stem cells.</title>
        <authorList>
            <person name="Schimmel J."/>
            <person name="Kool H."/>
            <person name="van Schendel R."/>
            <person name="Tijsterman M."/>
        </authorList>
    </citation>
    <scope>FUNCTION</scope>
</reference>
<reference key="16">
    <citation type="journal article" date="2017" name="Nat. Commun.">
        <title>Inactivation of Pol theta and C-NHEJ eliminates off-target integration of exogenous DNA.</title>
        <authorList>
            <person name="Zelensky A.N."/>
            <person name="Schimmel J."/>
            <person name="Kool H."/>
            <person name="Kanaar R."/>
            <person name="Tijsterman M."/>
        </authorList>
    </citation>
    <scope>FUNCTION</scope>
</reference>
<reference key="17">
    <citation type="journal article" date="2017" name="Nat. Struct. Mol. Biol.">
        <title>The helicase domain of Poltheta counteracts RPA to promote alt-NHEJ.</title>
        <authorList>
            <person name="Mateos-Gomez P.A."/>
            <person name="Kent T."/>
            <person name="Deng S.K."/>
            <person name="McDevitt S."/>
            <person name="Kashkina E."/>
            <person name="Hoang T.M."/>
            <person name="Pomerantz R.T."/>
            <person name="Sfeir A."/>
        </authorList>
    </citation>
    <scope>FUNCTION</scope>
    <scope>CATALYTIC ACTIVITY</scope>
    <scope>MUTAGENESIS OF LYS-120 AND 2494-ASP-GLU-2495</scope>
</reference>
<reference key="18">
    <citation type="journal article" date="2019" name="Cell">
        <title>Error-prone replication through UV lesions by DNA polymerase theta protects against skin cancers.</title>
        <authorList>
            <person name="Yoon J.H."/>
            <person name="McArthur M.J."/>
            <person name="Park J."/>
            <person name="Basu D."/>
            <person name="Wakamiya M."/>
            <person name="Prakash L."/>
            <person name="Prakash S."/>
        </authorList>
    </citation>
    <scope>FUNCTION</scope>
</reference>
<reference key="19">
    <citation type="journal article" date="2019" name="Nat. Commun.">
        <title>Genetic determinants of cellular addiction to DNA polymerase theta.</title>
        <authorList>
            <person name="Feng W."/>
            <person name="Simpson D.A."/>
            <person name="Carvajal-Garcia J."/>
            <person name="Price B.A."/>
            <person name="Kumar R.J."/>
            <person name="Mose L.E."/>
            <person name="Wood R.D."/>
            <person name="Rashid N."/>
            <person name="Purvis J.E."/>
            <person name="Parker J.S."/>
            <person name="Ramsden D.A."/>
            <person name="Gupta G.P."/>
        </authorList>
    </citation>
    <scope>FUNCTION</scope>
</reference>